<dbReference type="EC" id="2.4.2.18" evidence="1"/>
<dbReference type="EMBL" id="CP001230">
    <property type="protein sequence ID" value="ACO04266.1"/>
    <property type="molecule type" value="Genomic_DNA"/>
</dbReference>
<dbReference type="RefSeq" id="WP_012676504.1">
    <property type="nucleotide sequence ID" value="NC_012440.1"/>
</dbReference>
<dbReference type="SMR" id="C0QR68"/>
<dbReference type="STRING" id="123214.PERMA_1396"/>
<dbReference type="PaxDb" id="123214-PERMA_1396"/>
<dbReference type="KEGG" id="pmx:PERMA_1396"/>
<dbReference type="eggNOG" id="COG0547">
    <property type="taxonomic scope" value="Bacteria"/>
</dbReference>
<dbReference type="HOGENOM" id="CLU_034315_2_1_0"/>
<dbReference type="OrthoDB" id="9806430at2"/>
<dbReference type="UniPathway" id="UPA00035">
    <property type="reaction ID" value="UER00041"/>
</dbReference>
<dbReference type="Proteomes" id="UP000001366">
    <property type="component" value="Chromosome"/>
</dbReference>
<dbReference type="GO" id="GO:0005829">
    <property type="term" value="C:cytosol"/>
    <property type="evidence" value="ECO:0007669"/>
    <property type="project" value="TreeGrafter"/>
</dbReference>
<dbReference type="GO" id="GO:0004048">
    <property type="term" value="F:anthranilate phosphoribosyltransferase activity"/>
    <property type="evidence" value="ECO:0007669"/>
    <property type="project" value="UniProtKB-UniRule"/>
</dbReference>
<dbReference type="GO" id="GO:0000287">
    <property type="term" value="F:magnesium ion binding"/>
    <property type="evidence" value="ECO:0007669"/>
    <property type="project" value="UniProtKB-UniRule"/>
</dbReference>
<dbReference type="GO" id="GO:0000162">
    <property type="term" value="P:L-tryptophan biosynthetic process"/>
    <property type="evidence" value="ECO:0007669"/>
    <property type="project" value="UniProtKB-UniRule"/>
</dbReference>
<dbReference type="FunFam" id="3.40.1030.10:FF:000002">
    <property type="entry name" value="Anthranilate phosphoribosyltransferase"/>
    <property type="match status" value="1"/>
</dbReference>
<dbReference type="Gene3D" id="3.40.1030.10">
    <property type="entry name" value="Nucleoside phosphorylase/phosphoribosyltransferase catalytic domain"/>
    <property type="match status" value="1"/>
</dbReference>
<dbReference type="Gene3D" id="1.20.970.10">
    <property type="entry name" value="Transferase, Pyrimidine Nucleoside Phosphorylase, Chain C"/>
    <property type="match status" value="1"/>
</dbReference>
<dbReference type="HAMAP" id="MF_00211">
    <property type="entry name" value="TrpD"/>
    <property type="match status" value="1"/>
</dbReference>
<dbReference type="InterPro" id="IPR005940">
    <property type="entry name" value="Anthranilate_Pribosyl_Tfrase"/>
</dbReference>
<dbReference type="InterPro" id="IPR000312">
    <property type="entry name" value="Glycosyl_Trfase_fam3"/>
</dbReference>
<dbReference type="InterPro" id="IPR017459">
    <property type="entry name" value="Glycosyl_Trfase_fam3_N_dom"/>
</dbReference>
<dbReference type="InterPro" id="IPR036320">
    <property type="entry name" value="Glycosyl_Trfase_fam3_N_dom_sf"/>
</dbReference>
<dbReference type="InterPro" id="IPR035902">
    <property type="entry name" value="Nuc_phospho_transferase"/>
</dbReference>
<dbReference type="NCBIfam" id="TIGR01245">
    <property type="entry name" value="trpD"/>
    <property type="match status" value="1"/>
</dbReference>
<dbReference type="PANTHER" id="PTHR43285">
    <property type="entry name" value="ANTHRANILATE PHOSPHORIBOSYLTRANSFERASE"/>
    <property type="match status" value="1"/>
</dbReference>
<dbReference type="PANTHER" id="PTHR43285:SF2">
    <property type="entry name" value="ANTHRANILATE PHOSPHORIBOSYLTRANSFERASE"/>
    <property type="match status" value="1"/>
</dbReference>
<dbReference type="Pfam" id="PF02885">
    <property type="entry name" value="Glycos_trans_3N"/>
    <property type="match status" value="1"/>
</dbReference>
<dbReference type="Pfam" id="PF00591">
    <property type="entry name" value="Glycos_transf_3"/>
    <property type="match status" value="1"/>
</dbReference>
<dbReference type="SUPFAM" id="SSF52418">
    <property type="entry name" value="Nucleoside phosphorylase/phosphoribosyltransferase catalytic domain"/>
    <property type="match status" value="1"/>
</dbReference>
<dbReference type="SUPFAM" id="SSF47648">
    <property type="entry name" value="Nucleoside phosphorylase/phosphoribosyltransferase N-terminal domain"/>
    <property type="match status" value="1"/>
</dbReference>
<organism>
    <name type="scientific">Persephonella marina (strain DSM 14350 / EX-H1)</name>
    <dbReference type="NCBI Taxonomy" id="123214"/>
    <lineage>
        <taxon>Bacteria</taxon>
        <taxon>Pseudomonadati</taxon>
        <taxon>Aquificota</taxon>
        <taxon>Aquificia</taxon>
        <taxon>Aquificales</taxon>
        <taxon>Hydrogenothermaceae</taxon>
        <taxon>Persephonella</taxon>
    </lineage>
</organism>
<gene>
    <name evidence="1" type="primary">trpD</name>
    <name type="ordered locus">PERMA_1396</name>
</gene>
<evidence type="ECO:0000255" key="1">
    <source>
        <dbReference type="HAMAP-Rule" id="MF_00211"/>
    </source>
</evidence>
<name>TRPD_PERMH</name>
<protein>
    <recommendedName>
        <fullName evidence="1">Anthranilate phosphoribosyltransferase</fullName>
        <ecNumber evidence="1">2.4.2.18</ecNumber>
    </recommendedName>
</protein>
<reference key="1">
    <citation type="journal article" date="2009" name="J. Bacteriol.">
        <title>Complete and draft genome sequences of six members of the Aquificales.</title>
        <authorList>
            <person name="Reysenbach A.-L."/>
            <person name="Hamamura N."/>
            <person name="Podar M."/>
            <person name="Griffiths E."/>
            <person name="Ferreira S."/>
            <person name="Hochstein R."/>
            <person name="Heidelberg J."/>
            <person name="Johnson J."/>
            <person name="Mead D."/>
            <person name="Pohorille A."/>
            <person name="Sarmiento M."/>
            <person name="Schweighofer K."/>
            <person name="Seshadri R."/>
            <person name="Voytek M.A."/>
        </authorList>
    </citation>
    <scope>NUCLEOTIDE SEQUENCE [LARGE SCALE GENOMIC DNA]</scope>
    <source>
        <strain>DSM 14350 / EX-H1</strain>
    </source>
</reference>
<proteinExistence type="inferred from homology"/>
<accession>C0QR68</accession>
<sequence length="339" mass="36733">MIKEYIRKITEGKDLSADEMKDLFNILMEGQATDAQIGAVLIGLKMKGESVEEISSAAQIMREKAVKVPVKDRSRLIDTCGTGGDKVDTFNVSTITAFVIAGAGVKVAKHGNRSVSSKCGSADIMEALGVKIDLSPEQAAEAIDRIGLGFLFAPVYHPAMKNVIRQRREIGVRTIFNILGPLSNPAGAKYQLLGVYDKDLVEPVARVLSLLGIERAYVVHGMEGLDEVSITTDTMVAEVDGGDISVYSVKPEDFGIERASLDDIRGGDLDFNLQIALDILEGKDRSRKTDFVSLNAGFAFHAVGVVDSVKEGIELAKETIYSKKAYEILEKLREYSKGG</sequence>
<keyword id="KW-0028">Amino-acid biosynthesis</keyword>
<keyword id="KW-0057">Aromatic amino acid biosynthesis</keyword>
<keyword id="KW-0328">Glycosyltransferase</keyword>
<keyword id="KW-0460">Magnesium</keyword>
<keyword id="KW-0479">Metal-binding</keyword>
<keyword id="KW-1185">Reference proteome</keyword>
<keyword id="KW-0808">Transferase</keyword>
<keyword id="KW-0822">Tryptophan biosynthesis</keyword>
<comment type="function">
    <text evidence="1">Catalyzes the transfer of the phosphoribosyl group of 5-phosphorylribose-1-pyrophosphate (PRPP) to anthranilate to yield N-(5'-phosphoribosyl)-anthranilate (PRA).</text>
</comment>
<comment type="catalytic activity">
    <reaction evidence="1">
        <text>N-(5-phospho-beta-D-ribosyl)anthranilate + diphosphate = 5-phospho-alpha-D-ribose 1-diphosphate + anthranilate</text>
        <dbReference type="Rhea" id="RHEA:11768"/>
        <dbReference type="ChEBI" id="CHEBI:16567"/>
        <dbReference type="ChEBI" id="CHEBI:18277"/>
        <dbReference type="ChEBI" id="CHEBI:33019"/>
        <dbReference type="ChEBI" id="CHEBI:58017"/>
        <dbReference type="EC" id="2.4.2.18"/>
    </reaction>
</comment>
<comment type="cofactor">
    <cofactor evidence="1">
        <name>Mg(2+)</name>
        <dbReference type="ChEBI" id="CHEBI:18420"/>
    </cofactor>
    <text evidence="1">Binds 2 magnesium ions per monomer.</text>
</comment>
<comment type="pathway">
    <text evidence="1">Amino-acid biosynthesis; L-tryptophan biosynthesis; L-tryptophan from chorismate: step 2/5.</text>
</comment>
<comment type="subunit">
    <text evidence="1">Homodimer.</text>
</comment>
<comment type="similarity">
    <text evidence="1">Belongs to the anthranilate phosphoribosyltransferase family.</text>
</comment>
<feature type="chain" id="PRO_1000198834" description="Anthranilate phosphoribosyltransferase">
    <location>
        <begin position="1"/>
        <end position="339"/>
    </location>
</feature>
<feature type="binding site" evidence="1">
    <location>
        <position position="81"/>
    </location>
    <ligand>
        <name>5-phospho-alpha-D-ribose 1-diphosphate</name>
        <dbReference type="ChEBI" id="CHEBI:58017"/>
    </ligand>
</feature>
<feature type="binding site" evidence="1">
    <location>
        <position position="81"/>
    </location>
    <ligand>
        <name>anthranilate</name>
        <dbReference type="ChEBI" id="CHEBI:16567"/>
        <label>1</label>
    </ligand>
</feature>
<feature type="binding site" evidence="1">
    <location>
        <begin position="84"/>
        <end position="85"/>
    </location>
    <ligand>
        <name>5-phospho-alpha-D-ribose 1-diphosphate</name>
        <dbReference type="ChEBI" id="CHEBI:58017"/>
    </ligand>
</feature>
<feature type="binding site" evidence="1">
    <location>
        <position position="89"/>
    </location>
    <ligand>
        <name>5-phospho-alpha-D-ribose 1-diphosphate</name>
        <dbReference type="ChEBI" id="CHEBI:58017"/>
    </ligand>
</feature>
<feature type="binding site" evidence="1">
    <location>
        <begin position="91"/>
        <end position="94"/>
    </location>
    <ligand>
        <name>5-phospho-alpha-D-ribose 1-diphosphate</name>
        <dbReference type="ChEBI" id="CHEBI:58017"/>
    </ligand>
</feature>
<feature type="binding site" evidence="1">
    <location>
        <position position="93"/>
    </location>
    <ligand>
        <name>Mg(2+)</name>
        <dbReference type="ChEBI" id="CHEBI:18420"/>
        <label>1</label>
    </ligand>
</feature>
<feature type="binding site" evidence="1">
    <location>
        <begin position="109"/>
        <end position="117"/>
    </location>
    <ligand>
        <name>5-phospho-alpha-D-ribose 1-diphosphate</name>
        <dbReference type="ChEBI" id="CHEBI:58017"/>
    </ligand>
</feature>
<feature type="binding site" evidence="1">
    <location>
        <position position="112"/>
    </location>
    <ligand>
        <name>anthranilate</name>
        <dbReference type="ChEBI" id="CHEBI:16567"/>
        <label>1</label>
    </ligand>
</feature>
<feature type="binding site" evidence="1">
    <location>
        <position position="121"/>
    </location>
    <ligand>
        <name>5-phospho-alpha-D-ribose 1-diphosphate</name>
        <dbReference type="ChEBI" id="CHEBI:58017"/>
    </ligand>
</feature>
<feature type="binding site" evidence="1">
    <location>
        <position position="167"/>
    </location>
    <ligand>
        <name>anthranilate</name>
        <dbReference type="ChEBI" id="CHEBI:16567"/>
        <label>2</label>
    </ligand>
</feature>
<feature type="binding site" evidence="1">
    <location>
        <position position="226"/>
    </location>
    <ligand>
        <name>Mg(2+)</name>
        <dbReference type="ChEBI" id="CHEBI:18420"/>
        <label>2</label>
    </ligand>
</feature>
<feature type="binding site" evidence="1">
    <location>
        <position position="227"/>
    </location>
    <ligand>
        <name>Mg(2+)</name>
        <dbReference type="ChEBI" id="CHEBI:18420"/>
        <label>1</label>
    </ligand>
</feature>
<feature type="binding site" evidence="1">
    <location>
        <position position="227"/>
    </location>
    <ligand>
        <name>Mg(2+)</name>
        <dbReference type="ChEBI" id="CHEBI:18420"/>
        <label>2</label>
    </ligand>
</feature>